<organism>
    <name type="scientific">Candida glabrata (strain ATCC 2001 / BCRC 20586 / JCM 3761 / NBRC 0622 / NRRL Y-65 / CBS 138)</name>
    <name type="common">Yeast</name>
    <name type="synonym">Nakaseomyces glabratus</name>
    <dbReference type="NCBI Taxonomy" id="284593"/>
    <lineage>
        <taxon>Eukaryota</taxon>
        <taxon>Fungi</taxon>
        <taxon>Dikarya</taxon>
        <taxon>Ascomycota</taxon>
        <taxon>Saccharomycotina</taxon>
        <taxon>Saccharomycetes</taxon>
        <taxon>Saccharomycetales</taxon>
        <taxon>Saccharomycetaceae</taxon>
        <taxon>Nakaseomyces</taxon>
    </lineage>
</organism>
<proteinExistence type="inferred from homology"/>
<accession>Q6FIV4</accession>
<protein>
    <recommendedName>
        <fullName evidence="1">Pentafunctional AROM polypeptide</fullName>
    </recommendedName>
    <domain>
        <recommendedName>
            <fullName evidence="1">3-dehydroquinate synthase</fullName>
            <shortName evidence="1">DHQS</shortName>
            <ecNumber evidence="1">4.2.3.4</ecNumber>
        </recommendedName>
    </domain>
    <domain>
        <recommendedName>
            <fullName evidence="1">3-phosphoshikimate 1-carboxyvinyltransferase</fullName>
            <ecNumber evidence="1">2.5.1.19</ecNumber>
        </recommendedName>
        <alternativeName>
            <fullName evidence="1">5-enolpyruvylshikimate-3-phosphate synthase</fullName>
            <shortName evidence="1">EPSP synthase</shortName>
            <shortName evidence="1">EPSPS</shortName>
        </alternativeName>
    </domain>
    <domain>
        <recommendedName>
            <fullName evidence="1">Shikimate kinase</fullName>
            <shortName evidence="1">SK</shortName>
            <ecNumber evidence="1">2.7.1.71</ecNumber>
        </recommendedName>
    </domain>
    <domain>
        <recommendedName>
            <fullName evidence="1">3-dehydroquinate dehydratase</fullName>
            <shortName evidence="1">3-dehydroquinase</shortName>
            <ecNumber evidence="1">4.2.1.10</ecNumber>
        </recommendedName>
    </domain>
    <domain>
        <recommendedName>
            <fullName evidence="1">Shikimate dehydrogenase</fullName>
            <ecNumber evidence="1">1.1.1.25</ecNumber>
        </recommendedName>
    </domain>
</protein>
<comment type="function">
    <text evidence="1">The AROM polypeptide catalyzes 5 consecutive enzymatic reactions in prechorismate polyaromatic amino acid biosynthesis.</text>
</comment>
<comment type="catalytic activity">
    <reaction evidence="1">
        <text>7-phospho-2-dehydro-3-deoxy-D-arabino-heptonate = 3-dehydroquinate + phosphate</text>
        <dbReference type="Rhea" id="RHEA:21968"/>
        <dbReference type="ChEBI" id="CHEBI:32364"/>
        <dbReference type="ChEBI" id="CHEBI:43474"/>
        <dbReference type="ChEBI" id="CHEBI:58394"/>
        <dbReference type="EC" id="4.2.3.4"/>
    </reaction>
</comment>
<comment type="catalytic activity">
    <reaction evidence="1">
        <text>3-dehydroquinate = 3-dehydroshikimate + H2O</text>
        <dbReference type="Rhea" id="RHEA:21096"/>
        <dbReference type="ChEBI" id="CHEBI:15377"/>
        <dbReference type="ChEBI" id="CHEBI:16630"/>
        <dbReference type="ChEBI" id="CHEBI:32364"/>
        <dbReference type="EC" id="4.2.1.10"/>
    </reaction>
</comment>
<comment type="catalytic activity">
    <reaction evidence="1">
        <text>shikimate + NADP(+) = 3-dehydroshikimate + NADPH + H(+)</text>
        <dbReference type="Rhea" id="RHEA:17737"/>
        <dbReference type="ChEBI" id="CHEBI:15378"/>
        <dbReference type="ChEBI" id="CHEBI:16630"/>
        <dbReference type="ChEBI" id="CHEBI:36208"/>
        <dbReference type="ChEBI" id="CHEBI:57783"/>
        <dbReference type="ChEBI" id="CHEBI:58349"/>
        <dbReference type="EC" id="1.1.1.25"/>
    </reaction>
</comment>
<comment type="catalytic activity">
    <reaction evidence="1">
        <text>shikimate + ATP = 3-phosphoshikimate + ADP + H(+)</text>
        <dbReference type="Rhea" id="RHEA:13121"/>
        <dbReference type="ChEBI" id="CHEBI:15378"/>
        <dbReference type="ChEBI" id="CHEBI:30616"/>
        <dbReference type="ChEBI" id="CHEBI:36208"/>
        <dbReference type="ChEBI" id="CHEBI:145989"/>
        <dbReference type="ChEBI" id="CHEBI:456216"/>
        <dbReference type="EC" id="2.7.1.71"/>
    </reaction>
</comment>
<comment type="catalytic activity">
    <reaction evidence="1">
        <text>3-phosphoshikimate + phosphoenolpyruvate = 5-O-(1-carboxyvinyl)-3-phosphoshikimate + phosphate</text>
        <dbReference type="Rhea" id="RHEA:21256"/>
        <dbReference type="ChEBI" id="CHEBI:43474"/>
        <dbReference type="ChEBI" id="CHEBI:57701"/>
        <dbReference type="ChEBI" id="CHEBI:58702"/>
        <dbReference type="ChEBI" id="CHEBI:145989"/>
        <dbReference type="EC" id="2.5.1.19"/>
    </reaction>
</comment>
<comment type="cofactor">
    <cofactor>
        <name>Zn(2+)</name>
        <dbReference type="ChEBI" id="CHEBI:29105"/>
    </cofactor>
    <text>Binds 2 Zn(2+) ions per subunit.</text>
</comment>
<comment type="pathway">
    <text evidence="1">Metabolic intermediate biosynthesis; chorismate biosynthesis; chorismate from D-erythrose 4-phosphate and phosphoenolpyruvate: step 2/7.</text>
</comment>
<comment type="pathway">
    <text evidence="1">Metabolic intermediate biosynthesis; chorismate biosynthesis; chorismate from D-erythrose 4-phosphate and phosphoenolpyruvate: step 3/7.</text>
</comment>
<comment type="pathway">
    <text evidence="1">Metabolic intermediate biosynthesis; chorismate biosynthesis; chorismate from D-erythrose 4-phosphate and phosphoenolpyruvate: step 4/7.</text>
</comment>
<comment type="pathway">
    <text evidence="1">Metabolic intermediate biosynthesis; chorismate biosynthesis; chorismate from D-erythrose 4-phosphate and phosphoenolpyruvate: step 5/7.</text>
</comment>
<comment type="pathway">
    <text evidence="1">Metabolic intermediate biosynthesis; chorismate biosynthesis; chorismate from D-erythrose 4-phosphate and phosphoenolpyruvate: step 6/7.</text>
</comment>
<comment type="subunit">
    <text evidence="1">Homodimer.</text>
</comment>
<comment type="subcellular location">
    <subcellularLocation>
        <location evidence="1">Cytoplasm</location>
    </subcellularLocation>
</comment>
<comment type="similarity">
    <text evidence="1">In the N-terminal section; belongs to the sugar phosphate cyclases superfamily. Dehydroquinate synthase family.</text>
</comment>
<comment type="similarity">
    <text evidence="1">In the 2nd section; belongs to the EPSP synthase family.</text>
</comment>
<comment type="similarity">
    <text evidence="1">In the 3rd section; belongs to the shikimate kinase family.</text>
</comment>
<comment type="similarity">
    <text evidence="1">In the 4th section; belongs to the type-I 3-dehydroquinase family.</text>
</comment>
<comment type="similarity">
    <text evidence="1">In the C-terminal section; belongs to the shikimate dehydrogenase family.</text>
</comment>
<name>ARO1_CANGA</name>
<gene>
    <name evidence="1" type="primary">ARO1</name>
    <name type="ordered locus">CAGL0M11484g</name>
</gene>
<keyword id="KW-0028">Amino-acid biosynthesis</keyword>
<keyword id="KW-0057">Aromatic amino acid biosynthesis</keyword>
<keyword id="KW-0067">ATP-binding</keyword>
<keyword id="KW-0963">Cytoplasm</keyword>
<keyword id="KW-0418">Kinase</keyword>
<keyword id="KW-0456">Lyase</keyword>
<keyword id="KW-0479">Metal-binding</keyword>
<keyword id="KW-0511">Multifunctional enzyme</keyword>
<keyword id="KW-0521">NADP</keyword>
<keyword id="KW-0547">Nucleotide-binding</keyword>
<keyword id="KW-0560">Oxidoreductase</keyword>
<keyword id="KW-1185">Reference proteome</keyword>
<keyword id="KW-0808">Transferase</keyword>
<keyword id="KW-0862">Zinc</keyword>
<feature type="chain" id="PRO_0000406711" description="Pentafunctional AROM polypeptide">
    <location>
        <begin position="1"/>
        <end position="1579"/>
    </location>
</feature>
<feature type="region of interest" description="3-dehydroquinate synthase">
    <location>
        <begin position="1"/>
        <end position="383"/>
    </location>
</feature>
<feature type="region of interest" description="EPSP synthase">
    <location>
        <begin position="396"/>
        <end position="862"/>
    </location>
</feature>
<feature type="region of interest" description="Shikimate kinase">
    <location>
        <begin position="881"/>
        <end position="1071"/>
    </location>
</feature>
<feature type="region of interest" description="3-dehydroquinase">
    <location>
        <begin position="1072"/>
        <end position="1284"/>
    </location>
</feature>
<feature type="region of interest" description="Shikimate dehydrogenase">
    <location>
        <begin position="1297"/>
        <end position="1579"/>
    </location>
</feature>
<feature type="active site" description="Proton acceptor; for 3-dehydroquinate synthase activity" evidence="1">
    <location>
        <position position="259"/>
    </location>
</feature>
<feature type="active site" description="Proton acceptor; for 3-dehydroquinate synthase activity" evidence="1">
    <location>
        <position position="274"/>
    </location>
</feature>
<feature type="active site" description="For EPSP synthase activity" evidence="1">
    <location>
        <position position="844"/>
    </location>
</feature>
<feature type="active site" description="Proton acceptor; for 3-dehydroquinate dehydratase activity" evidence="1">
    <location>
        <position position="1189"/>
    </location>
</feature>
<feature type="active site" description="Schiff-base intermediate with substrate; for 3-dehydroquinate dehydratase activity" evidence="1">
    <location>
        <position position="1218"/>
    </location>
</feature>
<feature type="binding site" evidence="1">
    <location>
        <begin position="40"/>
        <end position="42"/>
    </location>
    <ligand>
        <name>NAD(+)</name>
        <dbReference type="ChEBI" id="CHEBI:57540"/>
    </ligand>
</feature>
<feature type="binding site" evidence="1">
    <location>
        <begin position="75"/>
        <end position="78"/>
    </location>
    <ligand>
        <name>NAD(+)</name>
        <dbReference type="ChEBI" id="CHEBI:57540"/>
    </ligand>
</feature>
<feature type="binding site" evidence="1">
    <location>
        <begin position="106"/>
        <end position="108"/>
    </location>
    <ligand>
        <name>NAD(+)</name>
        <dbReference type="ChEBI" id="CHEBI:57540"/>
    </ligand>
</feature>
<feature type="binding site" evidence="1">
    <location>
        <position position="111"/>
    </location>
    <ligand>
        <name>NAD(+)</name>
        <dbReference type="ChEBI" id="CHEBI:57540"/>
    </ligand>
</feature>
<feature type="binding site" evidence="1">
    <location>
        <position position="122"/>
    </location>
    <ligand>
        <name>7-phospho-2-dehydro-3-deoxy-D-arabino-heptonate</name>
        <dbReference type="ChEBI" id="CHEBI:58394"/>
    </ligand>
</feature>
<feature type="binding site" evidence="1">
    <location>
        <begin position="131"/>
        <end position="132"/>
    </location>
    <ligand>
        <name>NAD(+)</name>
        <dbReference type="ChEBI" id="CHEBI:57540"/>
    </ligand>
</feature>
<feature type="binding site" evidence="1">
    <location>
        <position position="138"/>
    </location>
    <ligand>
        <name>7-phospho-2-dehydro-3-deoxy-D-arabino-heptonate</name>
        <dbReference type="ChEBI" id="CHEBI:58394"/>
    </ligand>
</feature>
<feature type="binding site" evidence="1">
    <location>
        <position position="144"/>
    </location>
    <ligand>
        <name>7-phospho-2-dehydro-3-deoxy-D-arabino-heptonate</name>
        <dbReference type="ChEBI" id="CHEBI:58394"/>
    </ligand>
</feature>
<feature type="binding site" evidence="1">
    <location>
        <position position="153"/>
    </location>
    <ligand>
        <name>NAD(+)</name>
        <dbReference type="ChEBI" id="CHEBI:57540"/>
    </ligand>
</feature>
<feature type="binding site" evidence="1">
    <location>
        <position position="154"/>
    </location>
    <ligand>
        <name>7-phospho-2-dehydro-3-deoxy-D-arabino-heptonate</name>
        <dbReference type="ChEBI" id="CHEBI:58394"/>
    </ligand>
</feature>
<feature type="binding site" evidence="1">
    <location>
        <begin position="171"/>
        <end position="174"/>
    </location>
    <ligand>
        <name>NAD(+)</name>
        <dbReference type="ChEBI" id="CHEBI:57540"/>
    </ligand>
</feature>
<feature type="binding site" evidence="1">
    <location>
        <position position="182"/>
    </location>
    <ligand>
        <name>NAD(+)</name>
        <dbReference type="ChEBI" id="CHEBI:57540"/>
    </ligand>
</feature>
<feature type="binding site" evidence="1">
    <location>
        <begin position="186"/>
        <end position="189"/>
    </location>
    <ligand>
        <name>7-phospho-2-dehydro-3-deoxy-D-arabino-heptonate</name>
        <dbReference type="ChEBI" id="CHEBI:58394"/>
    </ligand>
</feature>
<feature type="binding site" evidence="1">
    <location>
        <position position="186"/>
    </location>
    <ligand>
        <name>Zn(2+)</name>
        <dbReference type="ChEBI" id="CHEBI:29105"/>
        <note>catalytic</note>
    </ligand>
</feature>
<feature type="binding site" evidence="1">
    <location>
        <position position="249"/>
    </location>
    <ligand>
        <name>7-phospho-2-dehydro-3-deoxy-D-arabino-heptonate</name>
        <dbReference type="ChEBI" id="CHEBI:58394"/>
    </ligand>
</feature>
<feature type="binding site" evidence="1">
    <location>
        <begin position="263"/>
        <end position="267"/>
    </location>
    <ligand>
        <name>7-phospho-2-dehydro-3-deoxy-D-arabino-heptonate</name>
        <dbReference type="ChEBI" id="CHEBI:58394"/>
    </ligand>
</feature>
<feature type="binding site" evidence="1">
    <location>
        <position position="270"/>
    </location>
    <ligand>
        <name>7-phospho-2-dehydro-3-deoxy-D-arabino-heptonate</name>
        <dbReference type="ChEBI" id="CHEBI:58394"/>
    </ligand>
</feature>
<feature type="binding site" evidence="1">
    <location>
        <position position="270"/>
    </location>
    <ligand>
        <name>Zn(2+)</name>
        <dbReference type="ChEBI" id="CHEBI:29105"/>
        <note>catalytic</note>
    </ligand>
</feature>
<feature type="binding site" evidence="1">
    <location>
        <position position="286"/>
    </location>
    <ligand>
        <name>7-phospho-2-dehydro-3-deoxy-D-arabino-heptonate</name>
        <dbReference type="ChEBI" id="CHEBI:58394"/>
    </ligand>
</feature>
<feature type="binding site" evidence="1">
    <location>
        <position position="286"/>
    </location>
    <ligand>
        <name>Zn(2+)</name>
        <dbReference type="ChEBI" id="CHEBI:29105"/>
        <note>catalytic</note>
    </ligand>
</feature>
<feature type="binding site" evidence="1">
    <location>
        <position position="355"/>
    </location>
    <ligand>
        <name>7-phospho-2-dehydro-3-deoxy-D-arabino-heptonate</name>
        <dbReference type="ChEBI" id="CHEBI:58394"/>
    </ligand>
</feature>
<feature type="binding site" evidence="1">
    <location>
        <begin position="886"/>
        <end position="893"/>
    </location>
    <ligand>
        <name>ATP</name>
        <dbReference type="ChEBI" id="CHEBI:30616"/>
    </ligand>
</feature>
<evidence type="ECO:0000255" key="1">
    <source>
        <dbReference type="HAMAP-Rule" id="MF_03143"/>
    </source>
</evidence>
<dbReference type="EC" id="4.2.3.4" evidence="1"/>
<dbReference type="EC" id="2.5.1.19" evidence="1"/>
<dbReference type="EC" id="2.7.1.71" evidence="1"/>
<dbReference type="EC" id="4.2.1.10" evidence="1"/>
<dbReference type="EC" id="1.1.1.25" evidence="1"/>
<dbReference type="EMBL" id="CR380959">
    <property type="protein sequence ID" value="CAG62820.1"/>
    <property type="molecule type" value="Genomic_DNA"/>
</dbReference>
<dbReference type="RefSeq" id="XP_449840.1">
    <property type="nucleotide sequence ID" value="XM_449840.1"/>
</dbReference>
<dbReference type="SMR" id="Q6FIV4"/>
<dbReference type="FunCoup" id="Q6FIV4">
    <property type="interactions" value="536"/>
</dbReference>
<dbReference type="STRING" id="284593.Q6FIV4"/>
<dbReference type="EnsemblFungi" id="CAGL0M11484g-T">
    <property type="protein sequence ID" value="CAGL0M11484g-T-p1"/>
    <property type="gene ID" value="CAGL0M11484g"/>
</dbReference>
<dbReference type="KEGG" id="cgr:2891409"/>
<dbReference type="CGD" id="CAL0136537">
    <property type="gene designation" value="CAGL0M11484g"/>
</dbReference>
<dbReference type="VEuPathDB" id="FungiDB:CAGL0M11484g"/>
<dbReference type="eggNOG" id="KOG0692">
    <property type="taxonomic scope" value="Eukaryota"/>
</dbReference>
<dbReference type="HOGENOM" id="CLU_001201_1_2_1"/>
<dbReference type="InParanoid" id="Q6FIV4"/>
<dbReference type="OMA" id="SWANMSW"/>
<dbReference type="UniPathway" id="UPA00053">
    <property type="reaction ID" value="UER00085"/>
</dbReference>
<dbReference type="UniPathway" id="UPA00053">
    <property type="reaction ID" value="UER00086"/>
</dbReference>
<dbReference type="UniPathway" id="UPA00053">
    <property type="reaction ID" value="UER00087"/>
</dbReference>
<dbReference type="UniPathway" id="UPA00053">
    <property type="reaction ID" value="UER00088"/>
</dbReference>
<dbReference type="UniPathway" id="UPA00053">
    <property type="reaction ID" value="UER00089"/>
</dbReference>
<dbReference type="Proteomes" id="UP000002428">
    <property type="component" value="Chromosome M"/>
</dbReference>
<dbReference type="GO" id="GO:0005737">
    <property type="term" value="C:cytoplasm"/>
    <property type="evidence" value="ECO:0007669"/>
    <property type="project" value="UniProtKB-SubCell"/>
</dbReference>
<dbReference type="GO" id="GO:0003855">
    <property type="term" value="F:3-dehydroquinate dehydratase activity"/>
    <property type="evidence" value="ECO:0007669"/>
    <property type="project" value="UniProtKB-UniRule"/>
</dbReference>
<dbReference type="GO" id="GO:0003856">
    <property type="term" value="F:3-dehydroquinate synthase activity"/>
    <property type="evidence" value="ECO:0007669"/>
    <property type="project" value="UniProtKB-UniRule"/>
</dbReference>
<dbReference type="GO" id="GO:0003866">
    <property type="term" value="F:3-phosphoshikimate 1-carboxyvinyltransferase activity"/>
    <property type="evidence" value="ECO:0007669"/>
    <property type="project" value="UniProtKB-UniRule"/>
</dbReference>
<dbReference type="GO" id="GO:0005524">
    <property type="term" value="F:ATP binding"/>
    <property type="evidence" value="ECO:0007669"/>
    <property type="project" value="UniProtKB-UniRule"/>
</dbReference>
<dbReference type="GO" id="GO:0046872">
    <property type="term" value="F:metal ion binding"/>
    <property type="evidence" value="ECO:0007669"/>
    <property type="project" value="UniProtKB-UniRule"/>
</dbReference>
<dbReference type="GO" id="GO:0004764">
    <property type="term" value="F:shikimate 3-dehydrogenase (NADP+) activity"/>
    <property type="evidence" value="ECO:0007669"/>
    <property type="project" value="UniProtKB-UniRule"/>
</dbReference>
<dbReference type="GO" id="GO:0004765">
    <property type="term" value="F:shikimate kinase activity"/>
    <property type="evidence" value="ECO:0007669"/>
    <property type="project" value="UniProtKB-UniRule"/>
</dbReference>
<dbReference type="GO" id="GO:0008652">
    <property type="term" value="P:amino acid biosynthetic process"/>
    <property type="evidence" value="ECO:0007669"/>
    <property type="project" value="UniProtKB-KW"/>
</dbReference>
<dbReference type="GO" id="GO:0009073">
    <property type="term" value="P:aromatic amino acid family biosynthetic process"/>
    <property type="evidence" value="ECO:0007669"/>
    <property type="project" value="UniProtKB-UniRule"/>
</dbReference>
<dbReference type="GO" id="GO:0009423">
    <property type="term" value="P:chorismate biosynthetic process"/>
    <property type="evidence" value="ECO:0007669"/>
    <property type="project" value="UniProtKB-UniRule"/>
</dbReference>
<dbReference type="CDD" id="cd00502">
    <property type="entry name" value="DHQase_I"/>
    <property type="match status" value="1"/>
</dbReference>
<dbReference type="CDD" id="cd08195">
    <property type="entry name" value="DHQS"/>
    <property type="match status" value="1"/>
</dbReference>
<dbReference type="CDD" id="cd01556">
    <property type="entry name" value="EPSP_synthase"/>
    <property type="match status" value="1"/>
</dbReference>
<dbReference type="CDD" id="cd01065">
    <property type="entry name" value="NAD_bind_Shikimate_DH"/>
    <property type="match status" value="1"/>
</dbReference>
<dbReference type="CDD" id="cd00464">
    <property type="entry name" value="SK"/>
    <property type="match status" value="1"/>
</dbReference>
<dbReference type="FunFam" id="1.20.1090.10:FF:000007">
    <property type="entry name" value="Pentafunctional AROM polypeptide"/>
    <property type="match status" value="1"/>
</dbReference>
<dbReference type="FunFam" id="3.20.20.70:FF:000135">
    <property type="entry name" value="Pentafunctional AROM polypeptide"/>
    <property type="match status" value="1"/>
</dbReference>
<dbReference type="FunFam" id="3.40.50.1970:FF:000007">
    <property type="entry name" value="Pentafunctional AROM polypeptide"/>
    <property type="match status" value="1"/>
</dbReference>
<dbReference type="FunFam" id="3.40.50.300:FF:001256">
    <property type="entry name" value="Pentafunctional AROM polypeptide"/>
    <property type="match status" value="1"/>
</dbReference>
<dbReference type="FunFam" id="3.65.10.10:FF:000007">
    <property type="entry name" value="Pentafunctional AROM polypeptide"/>
    <property type="match status" value="1"/>
</dbReference>
<dbReference type="FunFam" id="3.65.10.10:FF:000008">
    <property type="entry name" value="Pentafunctional AROM polypeptide"/>
    <property type="match status" value="1"/>
</dbReference>
<dbReference type="Gene3D" id="3.40.50.1970">
    <property type="match status" value="1"/>
</dbReference>
<dbReference type="Gene3D" id="3.20.20.70">
    <property type="entry name" value="Aldolase class I"/>
    <property type="match status" value="1"/>
</dbReference>
<dbReference type="Gene3D" id="1.20.1090.10">
    <property type="entry name" value="Dehydroquinate synthase-like - alpha domain"/>
    <property type="match status" value="1"/>
</dbReference>
<dbReference type="Gene3D" id="3.65.10.10">
    <property type="entry name" value="Enolpyruvate transferase domain"/>
    <property type="match status" value="2"/>
</dbReference>
<dbReference type="Gene3D" id="3.40.50.10860">
    <property type="entry name" value="Leucine Dehydrogenase, chain A, domain 1"/>
    <property type="match status" value="1"/>
</dbReference>
<dbReference type="Gene3D" id="3.40.50.720">
    <property type="entry name" value="NAD(P)-binding Rossmann-like Domain"/>
    <property type="match status" value="1"/>
</dbReference>
<dbReference type="Gene3D" id="3.40.50.300">
    <property type="entry name" value="P-loop containing nucleotide triphosphate hydrolases"/>
    <property type="match status" value="1"/>
</dbReference>
<dbReference type="HAMAP" id="MF_00210">
    <property type="entry name" value="EPSP_synth"/>
    <property type="match status" value="1"/>
</dbReference>
<dbReference type="HAMAP" id="MF_03143">
    <property type="entry name" value="Pentafunct_AroM"/>
    <property type="match status" value="1"/>
</dbReference>
<dbReference type="HAMAP" id="MF_00109">
    <property type="entry name" value="Shikimate_kinase"/>
    <property type="match status" value="1"/>
</dbReference>
<dbReference type="InterPro" id="IPR018508">
    <property type="entry name" value="3-dehydroquinate_DH_AS"/>
</dbReference>
<dbReference type="InterPro" id="IPR013785">
    <property type="entry name" value="Aldolase_TIM"/>
</dbReference>
<dbReference type="InterPro" id="IPR046346">
    <property type="entry name" value="Aminoacid_DH-like_N_sf"/>
</dbReference>
<dbReference type="InterPro" id="IPR016037">
    <property type="entry name" value="DHQ_synth_AroB"/>
</dbReference>
<dbReference type="InterPro" id="IPR030960">
    <property type="entry name" value="DHQS/DOIS_N"/>
</dbReference>
<dbReference type="InterPro" id="IPR056179">
    <property type="entry name" value="DHQS_C"/>
</dbReference>
<dbReference type="InterPro" id="IPR001381">
    <property type="entry name" value="DHquinase_I"/>
</dbReference>
<dbReference type="InterPro" id="IPR001986">
    <property type="entry name" value="Enolpyruvate_Tfrase_dom"/>
</dbReference>
<dbReference type="InterPro" id="IPR036968">
    <property type="entry name" value="Enolpyruvate_Tfrase_sf"/>
</dbReference>
<dbReference type="InterPro" id="IPR006264">
    <property type="entry name" value="EPSP_synthase"/>
</dbReference>
<dbReference type="InterPro" id="IPR023193">
    <property type="entry name" value="EPSP_synthase_CS"/>
</dbReference>
<dbReference type="InterPro" id="IPR036291">
    <property type="entry name" value="NAD(P)-bd_dom_sf"/>
</dbReference>
<dbReference type="InterPro" id="IPR027417">
    <property type="entry name" value="P-loop_NTPase"/>
</dbReference>
<dbReference type="InterPro" id="IPR008289">
    <property type="entry name" value="Pentafunct_AroM"/>
</dbReference>
<dbReference type="InterPro" id="IPR013792">
    <property type="entry name" value="RNA3'P_cycl/enolpyr_Trfase_a/b"/>
</dbReference>
<dbReference type="InterPro" id="IPR041121">
    <property type="entry name" value="SDH_C"/>
</dbReference>
<dbReference type="InterPro" id="IPR031322">
    <property type="entry name" value="Shikimate/glucono_kinase"/>
</dbReference>
<dbReference type="InterPro" id="IPR013708">
    <property type="entry name" value="Shikimate_DH-bd_N"/>
</dbReference>
<dbReference type="InterPro" id="IPR010110">
    <property type="entry name" value="Shikimate_DH_AroM-type"/>
</dbReference>
<dbReference type="InterPro" id="IPR000623">
    <property type="entry name" value="Shikimate_kinase/TSH1"/>
</dbReference>
<dbReference type="InterPro" id="IPR023000">
    <property type="entry name" value="Shikimate_kinase_CS"/>
</dbReference>
<dbReference type="InterPro" id="IPR006151">
    <property type="entry name" value="Shikm_DH/Glu-tRNA_Rdtase"/>
</dbReference>
<dbReference type="NCBIfam" id="TIGR01356">
    <property type="entry name" value="aroA"/>
    <property type="match status" value="1"/>
</dbReference>
<dbReference type="NCBIfam" id="TIGR01357">
    <property type="entry name" value="aroB"/>
    <property type="match status" value="1"/>
</dbReference>
<dbReference type="NCBIfam" id="TIGR01093">
    <property type="entry name" value="aroD"/>
    <property type="match status" value="1"/>
</dbReference>
<dbReference type="NCBIfam" id="TIGR01809">
    <property type="entry name" value="Shik-DH-AROM"/>
    <property type="match status" value="1"/>
</dbReference>
<dbReference type="PANTHER" id="PTHR21090">
    <property type="entry name" value="AROM/DEHYDROQUINATE SYNTHASE"/>
    <property type="match status" value="1"/>
</dbReference>
<dbReference type="PANTHER" id="PTHR21090:SF5">
    <property type="entry name" value="PENTAFUNCTIONAL AROM POLYPEPTIDE"/>
    <property type="match status" value="1"/>
</dbReference>
<dbReference type="Pfam" id="PF01761">
    <property type="entry name" value="DHQ_synthase"/>
    <property type="match status" value="1"/>
</dbReference>
<dbReference type="Pfam" id="PF24621">
    <property type="entry name" value="DHQS_C"/>
    <property type="match status" value="1"/>
</dbReference>
<dbReference type="Pfam" id="PF01487">
    <property type="entry name" value="DHquinase_I"/>
    <property type="match status" value="1"/>
</dbReference>
<dbReference type="Pfam" id="PF00275">
    <property type="entry name" value="EPSP_synthase"/>
    <property type="match status" value="1"/>
</dbReference>
<dbReference type="Pfam" id="PF18317">
    <property type="entry name" value="SDH_C"/>
    <property type="match status" value="1"/>
</dbReference>
<dbReference type="Pfam" id="PF01488">
    <property type="entry name" value="Shikimate_DH"/>
    <property type="match status" value="1"/>
</dbReference>
<dbReference type="Pfam" id="PF08501">
    <property type="entry name" value="Shikimate_dh_N"/>
    <property type="match status" value="1"/>
</dbReference>
<dbReference type="Pfam" id="PF01202">
    <property type="entry name" value="SKI"/>
    <property type="match status" value="1"/>
</dbReference>
<dbReference type="PIRSF" id="PIRSF000514">
    <property type="entry name" value="Pentafunct_AroM"/>
    <property type="match status" value="1"/>
</dbReference>
<dbReference type="PRINTS" id="PR01100">
    <property type="entry name" value="SHIKIMTKNASE"/>
</dbReference>
<dbReference type="SUPFAM" id="SSF51569">
    <property type="entry name" value="Aldolase"/>
    <property type="match status" value="1"/>
</dbReference>
<dbReference type="SUPFAM" id="SSF53223">
    <property type="entry name" value="Aminoacid dehydrogenase-like, N-terminal domain"/>
    <property type="match status" value="1"/>
</dbReference>
<dbReference type="SUPFAM" id="SSF56796">
    <property type="entry name" value="Dehydroquinate synthase-like"/>
    <property type="match status" value="1"/>
</dbReference>
<dbReference type="SUPFAM" id="SSF55205">
    <property type="entry name" value="EPT/RTPC-like"/>
    <property type="match status" value="1"/>
</dbReference>
<dbReference type="SUPFAM" id="SSF51735">
    <property type="entry name" value="NAD(P)-binding Rossmann-fold domains"/>
    <property type="match status" value="1"/>
</dbReference>
<dbReference type="SUPFAM" id="SSF52540">
    <property type="entry name" value="P-loop containing nucleoside triphosphate hydrolases"/>
    <property type="match status" value="1"/>
</dbReference>
<dbReference type="PROSITE" id="PS01028">
    <property type="entry name" value="DEHYDROQUINASE_I"/>
    <property type="match status" value="1"/>
</dbReference>
<dbReference type="PROSITE" id="PS00104">
    <property type="entry name" value="EPSP_SYNTHASE_1"/>
    <property type="match status" value="1"/>
</dbReference>
<dbReference type="PROSITE" id="PS00885">
    <property type="entry name" value="EPSP_SYNTHASE_2"/>
    <property type="match status" value="1"/>
</dbReference>
<dbReference type="PROSITE" id="PS01128">
    <property type="entry name" value="SHIKIMATE_KINASE"/>
    <property type="match status" value="1"/>
</dbReference>
<sequence length="1579" mass="174232">MLVKVPILGRETIHVGYGVRSHIVETIVGLKSSTYVVINDSNVGRVPYFQELLSDFEAQLPAGSRLLRYVVKPGEANKTRATKEQIEDYLLSEGCTRDTVIVAVGGGIIGDMIGYVAATFMRGVRVVQVPTSLLAMVDSSIGGKTAVDTPLGKNFIGAFWQPEFVLVDIKWLQSLPKREFINGMAEVIKTACIWNADEFQRLETHADEFLHVVNTPKISEKEGFQLYDTDIESIKEHIFKLVLESIKVKAEVVSSDERESSLRNLLNFGHSIGHAYEAILTPQALHGECVSIGMVKEAELSRYLGILSATQVARLSKILVAYGLPVSKDEKWFRELTLNKKTPLDTLLKKMSIDKKNDGSKKKVVLLETIGKCYGKSAHVVSDEDLRFVLTDETLVYPFNNIPRDQNKTVTPPGSKSISNRALVLAALGKGTCRIKNLLHSDDTKHMLTAVQELKGANISWEDNGETVVLEGQGGSTLVACENDLYLGNAGTASRFLTSVAALVNSTSQKDHVILTGNARMQQRPIGPLVDSLRNNGIKIDYVKNEGCLPLKVHTDSVFKGGRIELAATVSSQYVSSILMCAPYAENPVTLALVGGKPISILYVEMTIKMMEKFGIKVEKSTTEEYTYIIPKGHYVNPAEYVIESDASSATYPLAFAALTGTTVTVPNIGSASLQGDARFATDVLQPMGCSVTQTATSTTVTGPPVGHLKPLKHVDMEPMTDAFLTACVVAAVAHDNDPTSKNTTTIEGIANQRVKECNRIEAMCTQLAKFGVRTNELPDGIQVHGLHSINDLKVPSIGNEAVGVCTYDDHRVAMSFSLLAGMVNSEQPNSSNPTPVRILERHCTGKTWPGWWDVLHTELGAQLDGAEPLELNSMKNAKKSVVIIGMRAAGKTTISRWCAAALGYKLVDLDTLFEERYGHGMIKDFVSQHGWEKFREEEARIFKEVIENYGDAGYVFSSGGGLVESSESRRILKSFSKSGGYVLHLHRDIEETIMFLQKDPTRPAYVEEIREVWNRRESWYKDCSNFSFFAPHCNSEVEFQNLRRAFTKFIRTITGVTTVDIPTRRSAFVCLTFENLTEYTNSLKAITYGCDAVEVRVDHLSNMDEDFVSKQISILRASTDGLPIIFTVRTKKQGGKFPDEDYETLQKLLITALKVGVDYIDLELTLPIGIQYKVLNMKRNTKIIGSHHDFASAYPWDHSEWENRYNQALAMDVDIVKFVGMAKSFEDNLMLERFRDSHTTKPLIAINMGAHGRVSRVLNTILTPVTSEHLSEVAAPGQLTVAEINRIYTEMGGITKKDFFVVGSPIGHSRSPVLHNTGYSVLGLPHHFDKFETTSAEEVKKHLLDNKANLGGLAVTIPLKLDIIKYMDELTESAKVIGAVNTVIPLGNSKFKGDNTDWLGIRNSLVSNGVPESVSGLSGLVVGAGGTSRAAIFALHKLGCQKIFIVNRTTEKLEELVKFFPEEYNIVPIKEAEEAEAVNETIGVAVNCVPADKPLDAKLESLLERLLLKSSHTHFVSTLVEAAYKPSVTPVMKLAKDKYQWRVVPGAQMLVHQGVAQFETWNNCRAPFKAIYDAVTEI</sequence>
<reference key="1">
    <citation type="journal article" date="2004" name="Nature">
        <title>Genome evolution in yeasts.</title>
        <authorList>
            <person name="Dujon B."/>
            <person name="Sherman D."/>
            <person name="Fischer G."/>
            <person name="Durrens P."/>
            <person name="Casaregola S."/>
            <person name="Lafontaine I."/>
            <person name="de Montigny J."/>
            <person name="Marck C."/>
            <person name="Neuveglise C."/>
            <person name="Talla E."/>
            <person name="Goffard N."/>
            <person name="Frangeul L."/>
            <person name="Aigle M."/>
            <person name="Anthouard V."/>
            <person name="Babour A."/>
            <person name="Barbe V."/>
            <person name="Barnay S."/>
            <person name="Blanchin S."/>
            <person name="Beckerich J.-M."/>
            <person name="Beyne E."/>
            <person name="Bleykasten C."/>
            <person name="Boisrame A."/>
            <person name="Boyer J."/>
            <person name="Cattolico L."/>
            <person name="Confanioleri F."/>
            <person name="de Daruvar A."/>
            <person name="Despons L."/>
            <person name="Fabre E."/>
            <person name="Fairhead C."/>
            <person name="Ferry-Dumazet H."/>
            <person name="Groppi A."/>
            <person name="Hantraye F."/>
            <person name="Hennequin C."/>
            <person name="Jauniaux N."/>
            <person name="Joyet P."/>
            <person name="Kachouri R."/>
            <person name="Kerrest A."/>
            <person name="Koszul R."/>
            <person name="Lemaire M."/>
            <person name="Lesur I."/>
            <person name="Ma L."/>
            <person name="Muller H."/>
            <person name="Nicaud J.-M."/>
            <person name="Nikolski M."/>
            <person name="Oztas S."/>
            <person name="Ozier-Kalogeropoulos O."/>
            <person name="Pellenz S."/>
            <person name="Potier S."/>
            <person name="Richard G.-F."/>
            <person name="Straub M.-L."/>
            <person name="Suleau A."/>
            <person name="Swennen D."/>
            <person name="Tekaia F."/>
            <person name="Wesolowski-Louvel M."/>
            <person name="Westhof E."/>
            <person name="Wirth B."/>
            <person name="Zeniou-Meyer M."/>
            <person name="Zivanovic Y."/>
            <person name="Bolotin-Fukuhara M."/>
            <person name="Thierry A."/>
            <person name="Bouchier C."/>
            <person name="Caudron B."/>
            <person name="Scarpelli C."/>
            <person name="Gaillardin C."/>
            <person name="Weissenbach J."/>
            <person name="Wincker P."/>
            <person name="Souciet J.-L."/>
        </authorList>
    </citation>
    <scope>NUCLEOTIDE SEQUENCE [LARGE SCALE GENOMIC DNA]</scope>
    <source>
        <strain>ATCC 2001 / BCRC 20586 / JCM 3761 / NBRC 0622 / NRRL Y-65 / CBS 138</strain>
    </source>
</reference>